<dbReference type="EMBL" id="CP000058">
    <property type="protein sequence ID" value="AAZ34398.1"/>
    <property type="status" value="ALT_INIT"/>
    <property type="molecule type" value="Genomic_DNA"/>
</dbReference>
<dbReference type="RefSeq" id="WP_004662892.1">
    <property type="nucleotide sequence ID" value="NC_005773.3"/>
</dbReference>
<dbReference type="KEGG" id="psp:PSPPH_0063"/>
<dbReference type="eggNOG" id="COG1495">
    <property type="taxonomic scope" value="Bacteria"/>
</dbReference>
<dbReference type="HOGENOM" id="CLU_098660_1_1_6"/>
<dbReference type="Proteomes" id="UP000000551">
    <property type="component" value="Chromosome"/>
</dbReference>
<dbReference type="GO" id="GO:0005886">
    <property type="term" value="C:plasma membrane"/>
    <property type="evidence" value="ECO:0007669"/>
    <property type="project" value="UniProtKB-SubCell"/>
</dbReference>
<dbReference type="GO" id="GO:0009055">
    <property type="term" value="F:electron transfer activity"/>
    <property type="evidence" value="ECO:0007669"/>
    <property type="project" value="UniProtKB-UniRule"/>
</dbReference>
<dbReference type="GO" id="GO:0015035">
    <property type="term" value="F:protein-disulfide reductase activity"/>
    <property type="evidence" value="ECO:0007669"/>
    <property type="project" value="UniProtKB-UniRule"/>
</dbReference>
<dbReference type="GO" id="GO:0006457">
    <property type="term" value="P:protein folding"/>
    <property type="evidence" value="ECO:0007669"/>
    <property type="project" value="InterPro"/>
</dbReference>
<dbReference type="Gene3D" id="1.20.1550.10">
    <property type="entry name" value="DsbB-like"/>
    <property type="match status" value="1"/>
</dbReference>
<dbReference type="HAMAP" id="MF_00286">
    <property type="entry name" value="DsbB"/>
    <property type="match status" value="1"/>
</dbReference>
<dbReference type="InterPro" id="IPR003752">
    <property type="entry name" value="DiS_bond_form_DsbB/BdbC"/>
</dbReference>
<dbReference type="InterPro" id="IPR022920">
    <property type="entry name" value="Disulphide_bond_form_DsbB"/>
</dbReference>
<dbReference type="InterPro" id="IPR050183">
    <property type="entry name" value="DsbB"/>
</dbReference>
<dbReference type="InterPro" id="IPR023380">
    <property type="entry name" value="DsbB-like_sf"/>
</dbReference>
<dbReference type="PANTHER" id="PTHR36570">
    <property type="entry name" value="DISULFIDE BOND FORMATION PROTEIN B"/>
    <property type="match status" value="1"/>
</dbReference>
<dbReference type="PANTHER" id="PTHR36570:SF3">
    <property type="entry name" value="DISULFIDE BOND FORMATION PROTEIN B"/>
    <property type="match status" value="1"/>
</dbReference>
<dbReference type="Pfam" id="PF02600">
    <property type="entry name" value="DsbB"/>
    <property type="match status" value="1"/>
</dbReference>
<dbReference type="SUPFAM" id="SSF158442">
    <property type="entry name" value="DsbB-like"/>
    <property type="match status" value="1"/>
</dbReference>
<organism>
    <name type="scientific">Pseudomonas savastanoi pv. phaseolicola (strain 1448A / Race 6)</name>
    <name type="common">Pseudomonas syringae pv. phaseolicola (strain 1448A / Race 6)</name>
    <dbReference type="NCBI Taxonomy" id="264730"/>
    <lineage>
        <taxon>Bacteria</taxon>
        <taxon>Pseudomonadati</taxon>
        <taxon>Pseudomonadota</taxon>
        <taxon>Gammaproteobacteria</taxon>
        <taxon>Pseudomonadales</taxon>
        <taxon>Pseudomonadaceae</taxon>
        <taxon>Pseudomonas</taxon>
    </lineage>
</organism>
<sequence length="175" mass="19337">MYLARTRFLFFLASLACASIIGTAFYLQQTFGLDPCFLCLIQRAAIIACGVLALCAACHAPGPTGMRRYSLGFLLIALTGLVTAGAQVWLQTASADQLIPFITKLEHLLSLLSLDMCIDRLRSDAMFCAEITWTLFGISLPEWSLLAFTGLALLPLYPLFSEFSHWLATKDRARY</sequence>
<accession>Q48QE1</accession>
<gene>
    <name evidence="1" type="primary">dsbB2</name>
    <name type="ordered locus">PSPPH_0063</name>
</gene>
<proteinExistence type="inferred from homology"/>
<comment type="function">
    <text evidence="1">Required for disulfide bond formation in some periplasmic proteins. Acts by oxidizing the DsbA protein.</text>
</comment>
<comment type="subcellular location">
    <subcellularLocation>
        <location evidence="1">Cell inner membrane</location>
        <topology evidence="1">Multi-pass membrane protein</topology>
    </subcellularLocation>
</comment>
<comment type="similarity">
    <text evidence="1">Belongs to the DsbB family.</text>
</comment>
<comment type="sequence caution" evidence="2">
    <conflict type="erroneous initiation">
        <sequence resource="EMBL-CDS" id="AAZ34398"/>
    </conflict>
</comment>
<name>DSBB2_PSE14</name>
<protein>
    <recommendedName>
        <fullName evidence="1">Disulfide bond formation protein B 2</fullName>
    </recommendedName>
    <alternativeName>
        <fullName evidence="1">Disulfide oxidoreductase 2</fullName>
    </alternativeName>
</protein>
<keyword id="KW-0997">Cell inner membrane</keyword>
<keyword id="KW-1003">Cell membrane</keyword>
<keyword id="KW-0143">Chaperone</keyword>
<keyword id="KW-1015">Disulfide bond</keyword>
<keyword id="KW-0249">Electron transport</keyword>
<keyword id="KW-0472">Membrane</keyword>
<keyword id="KW-0560">Oxidoreductase</keyword>
<keyword id="KW-0676">Redox-active center</keyword>
<keyword id="KW-0812">Transmembrane</keyword>
<keyword id="KW-1133">Transmembrane helix</keyword>
<keyword id="KW-0813">Transport</keyword>
<feature type="chain" id="PRO_0000298393" description="Disulfide bond formation protein B 2">
    <location>
        <begin position="1"/>
        <end position="175"/>
    </location>
</feature>
<feature type="topological domain" description="Cytoplasmic" evidence="1">
    <location>
        <begin position="1"/>
        <end position="9"/>
    </location>
</feature>
<feature type="transmembrane region" description="Helical" evidence="1">
    <location>
        <begin position="10"/>
        <end position="26"/>
    </location>
</feature>
<feature type="topological domain" description="Periplasmic" evidence="1">
    <location>
        <begin position="27"/>
        <end position="44"/>
    </location>
</feature>
<feature type="transmembrane region" description="Helical" evidence="1">
    <location>
        <begin position="45"/>
        <end position="61"/>
    </location>
</feature>
<feature type="topological domain" description="Cytoplasmic" evidence="1">
    <location>
        <begin position="62"/>
        <end position="68"/>
    </location>
</feature>
<feature type="transmembrane region" description="Helical" evidence="1">
    <location>
        <begin position="69"/>
        <end position="85"/>
    </location>
</feature>
<feature type="topological domain" description="Periplasmic" evidence="1">
    <location>
        <begin position="86"/>
        <end position="142"/>
    </location>
</feature>
<feature type="transmembrane region" description="Helical" evidence="1">
    <location>
        <begin position="143"/>
        <end position="161"/>
    </location>
</feature>
<feature type="topological domain" description="Cytoplasmic" evidence="1">
    <location>
        <begin position="162"/>
        <end position="175"/>
    </location>
</feature>
<feature type="disulfide bond" description="Redox-active" evidence="1">
    <location>
        <begin position="36"/>
        <end position="39"/>
    </location>
</feature>
<evidence type="ECO:0000255" key="1">
    <source>
        <dbReference type="HAMAP-Rule" id="MF_00286"/>
    </source>
</evidence>
<evidence type="ECO:0000305" key="2"/>
<reference key="1">
    <citation type="journal article" date="2005" name="J. Bacteriol.">
        <title>Whole-genome sequence analysis of Pseudomonas syringae pv. phaseolicola 1448A reveals divergence among pathovars in genes involved in virulence and transposition.</title>
        <authorList>
            <person name="Joardar V."/>
            <person name="Lindeberg M."/>
            <person name="Jackson R.W."/>
            <person name="Selengut J."/>
            <person name="Dodson R."/>
            <person name="Brinkac L.M."/>
            <person name="Daugherty S.C."/>
            <person name="DeBoy R.T."/>
            <person name="Durkin A.S."/>
            <person name="Gwinn Giglio M."/>
            <person name="Madupu R."/>
            <person name="Nelson W.C."/>
            <person name="Rosovitz M.J."/>
            <person name="Sullivan S.A."/>
            <person name="Crabtree J."/>
            <person name="Creasy T."/>
            <person name="Davidsen T.M."/>
            <person name="Haft D.H."/>
            <person name="Zafar N."/>
            <person name="Zhou L."/>
            <person name="Halpin R."/>
            <person name="Holley T."/>
            <person name="Khouri H.M."/>
            <person name="Feldblyum T.V."/>
            <person name="White O."/>
            <person name="Fraser C.M."/>
            <person name="Chatterjee A.K."/>
            <person name="Cartinhour S."/>
            <person name="Schneider D."/>
            <person name="Mansfield J.W."/>
            <person name="Collmer A."/>
            <person name="Buell R."/>
        </authorList>
    </citation>
    <scope>NUCLEOTIDE SEQUENCE [LARGE SCALE GENOMIC DNA]</scope>
    <source>
        <strain>1448A / Race 6</strain>
    </source>
</reference>